<reference key="1">
    <citation type="journal article" date="2004" name="Genome Res.">
        <title>The status, quality, and expansion of the NIH full-length cDNA project: the Mammalian Gene Collection (MGC).</title>
        <authorList>
            <consortium name="The MGC Project Team"/>
        </authorList>
    </citation>
    <scope>NUCLEOTIDE SEQUENCE [LARGE SCALE MRNA]</scope>
    <source>
        <tissue>Testis</tissue>
    </source>
</reference>
<reference key="2">
    <citation type="journal article" date="2012" name="Nat. Commun.">
        <title>Quantitative maps of protein phosphorylation sites across 14 different rat organs and tissues.</title>
        <authorList>
            <person name="Lundby A."/>
            <person name="Secher A."/>
            <person name="Lage K."/>
            <person name="Nordsborg N.B."/>
            <person name="Dmytriyev A."/>
            <person name="Lundby C."/>
            <person name="Olsen J.V."/>
        </authorList>
    </citation>
    <scope>PHOSPHORYLATION [LARGE SCALE ANALYSIS] AT SER-41; SER-85; SER-88; SER-96; SER-123; SER-143; SER-147; SER-149; SER-211; SER-224; SER-272; SER-275; SER-333 AND SER-336</scope>
    <scope>IDENTIFICATION BY MASS SPECTROMETRY [LARGE SCALE ANALYSIS]</scope>
</reference>
<feature type="chain" id="PRO_0000307294" description="Protein chibby homolog 2">
    <location>
        <begin position="1"/>
        <end position="447"/>
    </location>
</feature>
<feature type="region of interest" description="Disordered" evidence="3">
    <location>
        <begin position="208"/>
        <end position="244"/>
    </location>
</feature>
<feature type="region of interest" description="Disordered" evidence="3">
    <location>
        <begin position="266"/>
        <end position="320"/>
    </location>
</feature>
<feature type="coiled-coil region" evidence="2">
    <location>
        <begin position="164"/>
        <end position="197"/>
    </location>
</feature>
<feature type="coiled-coil region" evidence="2">
    <location>
        <begin position="237"/>
        <end position="264"/>
    </location>
</feature>
<feature type="coiled-coil region" evidence="2">
    <location>
        <begin position="354"/>
        <end position="412"/>
    </location>
</feature>
<feature type="compositionally biased region" description="Basic and acidic residues" evidence="3">
    <location>
        <begin position="218"/>
        <end position="232"/>
    </location>
</feature>
<feature type="compositionally biased region" description="Low complexity" evidence="3">
    <location>
        <begin position="266"/>
        <end position="276"/>
    </location>
</feature>
<feature type="compositionally biased region" description="Basic and acidic residues" evidence="3">
    <location>
        <begin position="277"/>
        <end position="290"/>
    </location>
</feature>
<feature type="modified residue" description="Phosphoserine" evidence="5">
    <location>
        <position position="41"/>
    </location>
</feature>
<feature type="modified residue" description="Phosphoserine" evidence="5">
    <location>
        <position position="85"/>
    </location>
</feature>
<feature type="modified residue" description="Phosphoserine" evidence="5">
    <location>
        <position position="88"/>
    </location>
</feature>
<feature type="modified residue" description="Phosphoserine" evidence="5">
    <location>
        <position position="96"/>
    </location>
</feature>
<feature type="modified residue" description="Phosphoserine" evidence="5">
    <location>
        <position position="123"/>
    </location>
</feature>
<feature type="modified residue" description="Phosphoserine" evidence="5">
    <location>
        <position position="143"/>
    </location>
</feature>
<feature type="modified residue" description="Phosphoserine" evidence="5">
    <location>
        <position position="147"/>
    </location>
</feature>
<feature type="modified residue" description="Phosphoserine" evidence="5">
    <location>
        <position position="149"/>
    </location>
</feature>
<feature type="modified residue" description="Phosphoserine" evidence="5">
    <location>
        <position position="211"/>
    </location>
</feature>
<feature type="modified residue" description="Phosphoserine" evidence="5">
    <location>
        <position position="224"/>
    </location>
</feature>
<feature type="modified residue" description="Phosphoserine" evidence="5">
    <location>
        <position position="272"/>
    </location>
</feature>
<feature type="modified residue" description="Phosphoserine" evidence="5">
    <location>
        <position position="275"/>
    </location>
</feature>
<feature type="modified residue" description="Phosphoserine" evidence="5">
    <location>
        <position position="333"/>
    </location>
</feature>
<feature type="modified residue" description="Phosphoserine" evidence="5">
    <location>
        <position position="336"/>
    </location>
</feature>
<organism>
    <name type="scientific">Rattus norvegicus</name>
    <name type="common">Rat</name>
    <dbReference type="NCBI Taxonomy" id="10116"/>
    <lineage>
        <taxon>Eukaryota</taxon>
        <taxon>Metazoa</taxon>
        <taxon>Chordata</taxon>
        <taxon>Craniata</taxon>
        <taxon>Vertebrata</taxon>
        <taxon>Euteleostomi</taxon>
        <taxon>Mammalia</taxon>
        <taxon>Eutheria</taxon>
        <taxon>Euarchontoglires</taxon>
        <taxon>Glires</taxon>
        <taxon>Rodentia</taxon>
        <taxon>Myomorpha</taxon>
        <taxon>Muroidea</taxon>
        <taxon>Muridae</taxon>
        <taxon>Murinae</taxon>
        <taxon>Rattus</taxon>
    </lineage>
</organism>
<gene>
    <name type="primary">Cby2</name>
    <name type="synonym">Spert</name>
</gene>
<dbReference type="EMBL" id="BC079300">
    <property type="protein sequence ID" value="AAH79300.1"/>
    <property type="molecule type" value="mRNA"/>
</dbReference>
<dbReference type="RefSeq" id="NP_001017506.1">
    <property type="nucleotide sequence ID" value="NM_001017506.1"/>
</dbReference>
<dbReference type="SMR" id="Q6AXV6"/>
<dbReference type="FunCoup" id="Q6AXV6">
    <property type="interactions" value="5"/>
</dbReference>
<dbReference type="STRING" id="10116.ENSRNOP00000066296"/>
<dbReference type="iPTMnet" id="Q6AXV6"/>
<dbReference type="PhosphoSitePlus" id="Q6AXV6"/>
<dbReference type="PaxDb" id="10116-ENSRNOP00000066296"/>
<dbReference type="Ensembl" id="ENSRNOT00000072138.2">
    <property type="protein sequence ID" value="ENSRNOP00000066296.1"/>
    <property type="gene ID" value="ENSRNOG00000047413.2"/>
</dbReference>
<dbReference type="GeneID" id="498572"/>
<dbReference type="KEGG" id="rno:498572"/>
<dbReference type="AGR" id="RGD:1561044"/>
<dbReference type="CTD" id="220082"/>
<dbReference type="RGD" id="1561044">
    <property type="gene designation" value="Cby2"/>
</dbReference>
<dbReference type="eggNOG" id="ENOG502S6IZ">
    <property type="taxonomic scope" value="Eukaryota"/>
</dbReference>
<dbReference type="GeneTree" id="ENSGT00940000153137"/>
<dbReference type="HOGENOM" id="CLU_041289_0_0_1"/>
<dbReference type="InParanoid" id="Q6AXV6"/>
<dbReference type="OMA" id="QNEWSIW"/>
<dbReference type="OrthoDB" id="9025135at2759"/>
<dbReference type="PhylomeDB" id="Q6AXV6"/>
<dbReference type="PRO" id="PR:Q6AXV6"/>
<dbReference type="Proteomes" id="UP000002494">
    <property type="component" value="Chromosome 15"/>
</dbReference>
<dbReference type="Bgee" id="ENSRNOG00000047413">
    <property type="expression patterns" value="Expressed in testis and 1 other cell type or tissue"/>
</dbReference>
<dbReference type="GO" id="GO:0031410">
    <property type="term" value="C:cytoplasmic vesicle"/>
    <property type="evidence" value="ECO:0000266"/>
    <property type="project" value="RGD"/>
</dbReference>
<dbReference type="CDD" id="cd07429">
    <property type="entry name" value="Cby_like"/>
    <property type="match status" value="1"/>
</dbReference>
<dbReference type="InterPro" id="IPR028118">
    <property type="entry name" value="Chibby_fam"/>
</dbReference>
<dbReference type="PANTHER" id="PTHR21533">
    <property type="entry name" value="LEUCINE-RICH PROTEIN"/>
    <property type="match status" value="1"/>
</dbReference>
<dbReference type="PANTHER" id="PTHR21533:SF13">
    <property type="entry name" value="PROTEIN CHIBBY HOMOLOG 2"/>
    <property type="match status" value="1"/>
</dbReference>
<dbReference type="Pfam" id="PF14645">
    <property type="entry name" value="Chibby"/>
    <property type="match status" value="1"/>
</dbReference>
<evidence type="ECO:0000250" key="1"/>
<evidence type="ECO:0000255" key="2"/>
<evidence type="ECO:0000256" key="3">
    <source>
        <dbReference type="SAM" id="MobiDB-lite"/>
    </source>
</evidence>
<evidence type="ECO:0000305" key="4"/>
<evidence type="ECO:0007744" key="5">
    <source>
    </source>
</evidence>
<comment type="subunit">
    <text evidence="1">Homodimer. Binds to NEK1 (By similarity).</text>
</comment>
<comment type="similarity">
    <text evidence="4">Belongs to the chibby family. SPERT subfamily.</text>
</comment>
<protein>
    <recommendedName>
        <fullName evidence="4">Protein chibby homolog 2</fullName>
    </recommendedName>
    <alternativeName>
        <fullName>Spermatid-associated protein</fullName>
    </alternativeName>
</protein>
<keyword id="KW-0175">Coiled coil</keyword>
<keyword id="KW-0597">Phosphoprotein</keyword>
<keyword id="KW-1185">Reference proteome</keyword>
<sequence length="447" mass="52009">MSPLECSECFGDQLMHRTYTWHLTLHSRPNFTRKREIRSESLEIPINVILPQRGTEPFLRLHNLYTTPRCSRQAAMPRISRRVASQHSYPLNRFSSMPFDPMERPTSQADLELDYNPPRVQLSDEMFVFQDGRWVNESCRLQSPYFSPSSSFHHKLHHKRMAKEYLLQEENKSLRDENRALRDENKALRKENKILQVFWEEHKVTLGHEESQTSSPLLHKDTTSQEVVKKDNATLPAQRSKENTLQFIREENRALQQLLEQRQAYWAQAEESATSAEEGKPTSSPKEEPHNSGLLPDQSTSHSSHFEEPKASPTTQEDSKTLRALREMVTNLSGPSGEEEGKAGPNLTDSAQPLQLLREMNQALQALREENRLLQEENRALHAMREEHRVFQEENKALWENNKLKLQQRLVIDTVTEVTARMEMLIEELYAFMPAKNNKDPKKPSRV</sequence>
<proteinExistence type="evidence at protein level"/>
<accession>Q6AXV6</accession>
<name>CBY2_RAT</name>